<organism>
    <name type="scientific">Conus leopardus</name>
    <name type="common">Leopard cone</name>
    <dbReference type="NCBI Taxonomy" id="101306"/>
    <lineage>
        <taxon>Eukaryota</taxon>
        <taxon>Metazoa</taxon>
        <taxon>Spiralia</taxon>
        <taxon>Lophotrochozoa</taxon>
        <taxon>Mollusca</taxon>
        <taxon>Gastropoda</taxon>
        <taxon>Caenogastropoda</taxon>
        <taxon>Neogastropoda</taxon>
        <taxon>Conoidea</taxon>
        <taxon>Conidae</taxon>
        <taxon>Conus</taxon>
        <taxon>Lithoconus</taxon>
    </lineage>
</organism>
<accession>P0C904</accession>
<reference key="1">
    <citation type="journal article" date="2008" name="Mol. Ecol.">
        <title>Evolution of ecological specialization and venom of a predatory marine gastropod.</title>
        <authorList>
            <person name="Remigio E.A."/>
            <person name="Duda T.F. Jr."/>
        </authorList>
    </citation>
    <scope>NUCLEOTIDE SEQUENCE [GENOMIC DNA]</scope>
</reference>
<dbReference type="EMBL" id="EF467318">
    <property type="status" value="NOT_ANNOTATED_CDS"/>
    <property type="molecule type" value="Genomic_DNA"/>
</dbReference>
<dbReference type="ConoServer" id="3719">
    <property type="toxin name" value="Lp6.4 precursor"/>
</dbReference>
<dbReference type="GO" id="GO:0005576">
    <property type="term" value="C:extracellular region"/>
    <property type="evidence" value="ECO:0007669"/>
    <property type="project" value="UniProtKB-SubCell"/>
</dbReference>
<dbReference type="GO" id="GO:0008200">
    <property type="term" value="F:ion channel inhibitor activity"/>
    <property type="evidence" value="ECO:0007669"/>
    <property type="project" value="InterPro"/>
</dbReference>
<dbReference type="GO" id="GO:0090729">
    <property type="term" value="F:toxin activity"/>
    <property type="evidence" value="ECO:0007669"/>
    <property type="project" value="UniProtKB-KW"/>
</dbReference>
<dbReference type="InterPro" id="IPR004214">
    <property type="entry name" value="Conotoxin"/>
</dbReference>
<dbReference type="Pfam" id="PF02950">
    <property type="entry name" value="Conotoxin"/>
    <property type="match status" value="1"/>
</dbReference>
<sequence>MKLTCVVIVAVLFLTACQLATADISGGMRKHRALRSTTKLSRSPFDCSSPGAFCGLVPCCDSCNVLGRCGSGLHV</sequence>
<feature type="signal peptide" evidence="3">
    <location>
        <begin position="1"/>
        <end position="22"/>
    </location>
</feature>
<feature type="propeptide" id="PRO_0000368007" evidence="6">
    <location>
        <begin position="23"/>
        <end position="42"/>
    </location>
</feature>
<feature type="peptide" id="PRO_0000368008" description="Conotoxin Leo-O3" evidence="6">
    <location>
        <begin position="43"/>
        <end position="69"/>
    </location>
</feature>
<feature type="propeptide" id="PRO_0000368009" evidence="5">
    <location>
        <begin position="70"/>
        <end position="75"/>
    </location>
</feature>
<feature type="modified residue" description="Cysteine amide" evidence="2">
    <location>
        <position position="69"/>
    </location>
</feature>
<feature type="disulfide bond" evidence="5">
    <location>
        <begin position="47"/>
        <end position="60"/>
    </location>
</feature>
<feature type="disulfide bond" evidence="5">
    <location>
        <begin position="54"/>
        <end position="63"/>
    </location>
</feature>
<feature type="disulfide bond" evidence="5">
    <location>
        <begin position="59"/>
        <end position="69"/>
    </location>
</feature>
<proteinExistence type="inferred from homology"/>
<comment type="subcellular location">
    <subcellularLocation>
        <location evidence="6">Secreted</location>
    </subcellularLocation>
</comment>
<comment type="tissue specificity">
    <text evidence="6">Expressed by the venom duct.</text>
</comment>
<comment type="domain">
    <text evidence="1">The presence of a 'disulfide through disulfide knot' structurally defines this protein as a knottin.</text>
</comment>
<comment type="domain">
    <text evidence="5">The cysteine framework is VI/VII (C-C-CC-C-C).</text>
</comment>
<comment type="similarity">
    <text evidence="5">Belongs to the conotoxin O1 superfamily.</text>
</comment>
<keyword id="KW-0027">Amidation</keyword>
<keyword id="KW-1015">Disulfide bond</keyword>
<keyword id="KW-0960">Knottin</keyword>
<keyword id="KW-0528">Neurotoxin</keyword>
<keyword id="KW-0964">Secreted</keyword>
<keyword id="KW-0732">Signal</keyword>
<keyword id="KW-0800">Toxin</keyword>
<name>O163_CONLE</name>
<protein>
    <recommendedName>
        <fullName evidence="4">Conotoxin Leo-O3</fullName>
    </recommendedName>
</protein>
<evidence type="ECO:0000250" key="1"/>
<evidence type="ECO:0000250" key="2">
    <source>
        <dbReference type="UniProtKB" id="Q9XZK2"/>
    </source>
</evidence>
<evidence type="ECO:0000255" key="3"/>
<evidence type="ECO:0000303" key="4">
    <source>
    </source>
</evidence>
<evidence type="ECO:0000305" key="5"/>
<evidence type="ECO:0000305" key="6">
    <source>
    </source>
</evidence>